<dbReference type="EC" id="2.1.1.45" evidence="1"/>
<dbReference type="EMBL" id="AE014299">
    <property type="protein sequence ID" value="AAN54400.1"/>
    <property type="molecule type" value="Genomic_DNA"/>
</dbReference>
<dbReference type="RefSeq" id="NP_716955.1">
    <property type="nucleotide sequence ID" value="NC_004347.2"/>
</dbReference>
<dbReference type="RefSeq" id="WP_011071544.1">
    <property type="nucleotide sequence ID" value="NC_004347.2"/>
</dbReference>
<dbReference type="SMR" id="Q8EH94"/>
<dbReference type="STRING" id="211586.SO_1335"/>
<dbReference type="PaxDb" id="211586-SO_1335"/>
<dbReference type="KEGG" id="son:SO_1335"/>
<dbReference type="PATRIC" id="fig|211586.12.peg.1285"/>
<dbReference type="eggNOG" id="COG0207">
    <property type="taxonomic scope" value="Bacteria"/>
</dbReference>
<dbReference type="HOGENOM" id="CLU_021669_0_0_6"/>
<dbReference type="OrthoDB" id="9774633at2"/>
<dbReference type="PhylomeDB" id="Q8EH94"/>
<dbReference type="BioCyc" id="SONE211586:G1GMP-1233-MONOMER"/>
<dbReference type="UniPathway" id="UPA00575"/>
<dbReference type="Proteomes" id="UP000008186">
    <property type="component" value="Chromosome"/>
</dbReference>
<dbReference type="GO" id="GO:0005829">
    <property type="term" value="C:cytosol"/>
    <property type="evidence" value="ECO:0000318"/>
    <property type="project" value="GO_Central"/>
</dbReference>
<dbReference type="GO" id="GO:0004799">
    <property type="term" value="F:thymidylate synthase activity"/>
    <property type="evidence" value="ECO:0000318"/>
    <property type="project" value="GO_Central"/>
</dbReference>
<dbReference type="GO" id="GO:0006231">
    <property type="term" value="P:dTMP biosynthetic process"/>
    <property type="evidence" value="ECO:0000318"/>
    <property type="project" value="GO_Central"/>
</dbReference>
<dbReference type="GO" id="GO:0006235">
    <property type="term" value="P:dTTP biosynthetic process"/>
    <property type="evidence" value="ECO:0007669"/>
    <property type="project" value="UniProtKB-UniRule"/>
</dbReference>
<dbReference type="GO" id="GO:0032259">
    <property type="term" value="P:methylation"/>
    <property type="evidence" value="ECO:0007669"/>
    <property type="project" value="UniProtKB-KW"/>
</dbReference>
<dbReference type="CDD" id="cd00351">
    <property type="entry name" value="TS_Pyrimidine_HMase"/>
    <property type="match status" value="1"/>
</dbReference>
<dbReference type="FunFam" id="3.30.572.10:FF:000001">
    <property type="entry name" value="Thymidylate synthase"/>
    <property type="match status" value="1"/>
</dbReference>
<dbReference type="Gene3D" id="3.30.572.10">
    <property type="entry name" value="Thymidylate synthase/dCMP hydroxymethylase domain"/>
    <property type="match status" value="1"/>
</dbReference>
<dbReference type="HAMAP" id="MF_00008">
    <property type="entry name" value="Thymidy_synth_bact"/>
    <property type="match status" value="1"/>
</dbReference>
<dbReference type="InterPro" id="IPR045097">
    <property type="entry name" value="Thymidate_synth/dCMP_Mease"/>
</dbReference>
<dbReference type="InterPro" id="IPR023451">
    <property type="entry name" value="Thymidate_synth/dCMP_Mease_dom"/>
</dbReference>
<dbReference type="InterPro" id="IPR036926">
    <property type="entry name" value="Thymidate_synth/dCMP_Mease_sf"/>
</dbReference>
<dbReference type="InterPro" id="IPR000398">
    <property type="entry name" value="Thymidylate_synthase"/>
</dbReference>
<dbReference type="InterPro" id="IPR020940">
    <property type="entry name" value="Thymidylate_synthase_AS"/>
</dbReference>
<dbReference type="NCBIfam" id="NF002497">
    <property type="entry name" value="PRK01827.1-3"/>
    <property type="match status" value="1"/>
</dbReference>
<dbReference type="NCBIfam" id="NF002499">
    <property type="entry name" value="PRK01827.1-5"/>
    <property type="match status" value="1"/>
</dbReference>
<dbReference type="NCBIfam" id="TIGR03284">
    <property type="entry name" value="thym_sym"/>
    <property type="match status" value="2"/>
</dbReference>
<dbReference type="PANTHER" id="PTHR11548:SF9">
    <property type="entry name" value="THYMIDYLATE SYNTHASE"/>
    <property type="match status" value="1"/>
</dbReference>
<dbReference type="PANTHER" id="PTHR11548">
    <property type="entry name" value="THYMIDYLATE SYNTHASE 1"/>
    <property type="match status" value="1"/>
</dbReference>
<dbReference type="Pfam" id="PF00303">
    <property type="entry name" value="Thymidylat_synt"/>
    <property type="match status" value="1"/>
</dbReference>
<dbReference type="PRINTS" id="PR00108">
    <property type="entry name" value="THYMDSNTHASE"/>
</dbReference>
<dbReference type="SUPFAM" id="SSF55831">
    <property type="entry name" value="Thymidylate synthase/dCMP hydroxymethylase"/>
    <property type="match status" value="1"/>
</dbReference>
<dbReference type="PROSITE" id="PS00091">
    <property type="entry name" value="THYMIDYLATE_SYNTHASE"/>
    <property type="match status" value="1"/>
</dbReference>
<feature type="chain" id="PRO_0000141015" description="Thymidylate synthase">
    <location>
        <begin position="1"/>
        <end position="264"/>
    </location>
</feature>
<feature type="active site" description="Nucleophile" evidence="1">
    <location>
        <position position="146"/>
    </location>
</feature>
<feature type="binding site" description="in other chain" evidence="1">
    <location>
        <position position="21"/>
    </location>
    <ligand>
        <name>dUMP</name>
        <dbReference type="ChEBI" id="CHEBI:246422"/>
        <note>ligand shared between dimeric partners</note>
    </ligand>
</feature>
<feature type="binding site" evidence="1">
    <location>
        <position position="51"/>
    </location>
    <ligand>
        <name>(6R)-5,10-methylene-5,6,7,8-tetrahydrofolate</name>
        <dbReference type="ChEBI" id="CHEBI:15636"/>
    </ligand>
</feature>
<feature type="binding site" evidence="1">
    <location>
        <begin position="126"/>
        <end position="127"/>
    </location>
    <ligand>
        <name>dUMP</name>
        <dbReference type="ChEBI" id="CHEBI:246422"/>
        <note>ligand shared between dimeric partners</note>
    </ligand>
</feature>
<feature type="binding site" description="in other chain" evidence="1">
    <location>
        <begin position="166"/>
        <end position="169"/>
    </location>
    <ligand>
        <name>dUMP</name>
        <dbReference type="ChEBI" id="CHEBI:246422"/>
        <note>ligand shared between dimeric partners</note>
    </ligand>
</feature>
<feature type="binding site" evidence="1">
    <location>
        <position position="169"/>
    </location>
    <ligand>
        <name>(6R)-5,10-methylene-5,6,7,8-tetrahydrofolate</name>
        <dbReference type="ChEBI" id="CHEBI:15636"/>
    </ligand>
</feature>
<feature type="binding site" description="in other chain" evidence="1">
    <location>
        <position position="177"/>
    </location>
    <ligand>
        <name>dUMP</name>
        <dbReference type="ChEBI" id="CHEBI:246422"/>
        <note>ligand shared between dimeric partners</note>
    </ligand>
</feature>
<feature type="binding site" description="in other chain" evidence="1">
    <location>
        <begin position="207"/>
        <end position="209"/>
    </location>
    <ligand>
        <name>dUMP</name>
        <dbReference type="ChEBI" id="CHEBI:246422"/>
        <note>ligand shared between dimeric partners</note>
    </ligand>
</feature>
<feature type="binding site" evidence="1">
    <location>
        <position position="263"/>
    </location>
    <ligand>
        <name>(6R)-5,10-methylene-5,6,7,8-tetrahydrofolate</name>
        <dbReference type="ChEBI" id="CHEBI:15636"/>
    </ligand>
</feature>
<name>TYSY_SHEON</name>
<gene>
    <name evidence="1" type="primary">thyA</name>
    <name type="ordered locus">SO_1335</name>
</gene>
<proteinExistence type="inferred from homology"/>
<organism>
    <name type="scientific">Shewanella oneidensis (strain ATCC 700550 / JCM 31522 / CIP 106686 / LMG 19005 / NCIMB 14063 / MR-1)</name>
    <dbReference type="NCBI Taxonomy" id="211586"/>
    <lineage>
        <taxon>Bacteria</taxon>
        <taxon>Pseudomonadati</taxon>
        <taxon>Pseudomonadota</taxon>
        <taxon>Gammaproteobacteria</taxon>
        <taxon>Alteromonadales</taxon>
        <taxon>Shewanellaceae</taxon>
        <taxon>Shewanella</taxon>
    </lineage>
</organism>
<keyword id="KW-0963">Cytoplasm</keyword>
<keyword id="KW-0489">Methyltransferase</keyword>
<keyword id="KW-0545">Nucleotide biosynthesis</keyword>
<keyword id="KW-1185">Reference proteome</keyword>
<keyword id="KW-0808">Transferase</keyword>
<comment type="function">
    <text evidence="1">Catalyzes the reductive methylation of 2'-deoxyuridine-5'-monophosphate (dUMP) to 2'-deoxythymidine-5'-monophosphate (dTMP) while utilizing 5,10-methylenetetrahydrofolate (mTHF) as the methyl donor and reductant in the reaction, yielding dihydrofolate (DHF) as a by-product. This enzymatic reaction provides an intracellular de novo source of dTMP, an essential precursor for DNA biosynthesis.</text>
</comment>
<comment type="catalytic activity">
    <reaction evidence="1">
        <text>dUMP + (6R)-5,10-methylene-5,6,7,8-tetrahydrofolate = 7,8-dihydrofolate + dTMP</text>
        <dbReference type="Rhea" id="RHEA:12104"/>
        <dbReference type="ChEBI" id="CHEBI:15636"/>
        <dbReference type="ChEBI" id="CHEBI:57451"/>
        <dbReference type="ChEBI" id="CHEBI:63528"/>
        <dbReference type="ChEBI" id="CHEBI:246422"/>
        <dbReference type="EC" id="2.1.1.45"/>
    </reaction>
</comment>
<comment type="pathway">
    <text evidence="1">Pyrimidine metabolism; dTTP biosynthesis.</text>
</comment>
<comment type="subunit">
    <text evidence="1">Homodimer.</text>
</comment>
<comment type="subcellular location">
    <subcellularLocation>
        <location evidence="1">Cytoplasm</location>
    </subcellularLocation>
</comment>
<comment type="similarity">
    <text evidence="1">Belongs to the thymidylate synthase family. Bacterial-type ThyA subfamily.</text>
</comment>
<protein>
    <recommendedName>
        <fullName evidence="1">Thymidylate synthase</fullName>
        <shortName evidence="1">TS</shortName>
        <shortName evidence="1">TSase</shortName>
        <ecNumber evidence="1">2.1.1.45</ecNumber>
    </recommendedName>
</protein>
<reference key="1">
    <citation type="journal article" date="2002" name="Nat. Biotechnol.">
        <title>Genome sequence of the dissimilatory metal ion-reducing bacterium Shewanella oneidensis.</title>
        <authorList>
            <person name="Heidelberg J.F."/>
            <person name="Paulsen I.T."/>
            <person name="Nelson K.E."/>
            <person name="Gaidos E.J."/>
            <person name="Nelson W.C."/>
            <person name="Read T.D."/>
            <person name="Eisen J.A."/>
            <person name="Seshadri R."/>
            <person name="Ward N.L."/>
            <person name="Methe B.A."/>
            <person name="Clayton R.A."/>
            <person name="Meyer T."/>
            <person name="Tsapin A."/>
            <person name="Scott J."/>
            <person name="Beanan M.J."/>
            <person name="Brinkac L.M."/>
            <person name="Daugherty S.C."/>
            <person name="DeBoy R.T."/>
            <person name="Dodson R.J."/>
            <person name="Durkin A.S."/>
            <person name="Haft D.H."/>
            <person name="Kolonay J.F."/>
            <person name="Madupu R."/>
            <person name="Peterson J.D."/>
            <person name="Umayam L.A."/>
            <person name="White O."/>
            <person name="Wolf A.M."/>
            <person name="Vamathevan J.J."/>
            <person name="Weidman J.F."/>
            <person name="Impraim M."/>
            <person name="Lee K."/>
            <person name="Berry K.J."/>
            <person name="Lee C."/>
            <person name="Mueller J."/>
            <person name="Khouri H.M."/>
            <person name="Gill J."/>
            <person name="Utterback T.R."/>
            <person name="McDonald L.A."/>
            <person name="Feldblyum T.V."/>
            <person name="Smith H.O."/>
            <person name="Venter J.C."/>
            <person name="Nealson K.H."/>
            <person name="Fraser C.M."/>
        </authorList>
    </citation>
    <scope>NUCLEOTIDE SEQUENCE [LARGE SCALE GENOMIC DNA]</scope>
    <source>
        <strain>ATCC 700550 / JCM 31522 / CIP 106686 / LMG 19005 / NCIMB 14063 / MR-1</strain>
    </source>
</reference>
<sequence length="264" mass="30005">MQQYLDLMKHILAEGVDKSDRTGTGTRSVFGYQMRFDLSKGFPLVTTKKCHMRSIIHELLWFLKGDTNIAYLRDNKVSIWDEWADENGDLGPVYGAQWRSWPTQSGEAIDQISQVIAQIKSQPDSRRLIVSAWNVGELDKMALAPCHAFFQFYVADGKLSCQLYQRSCDVFLGLPFNIASYALLTMMVAQQCDLALGDFVWTGGDTHLYSNHMEQTALQLSREPRPLPTMTILRKPASIFDYQFDDFALSNYDPHPHIKAPVAV</sequence>
<evidence type="ECO:0000255" key="1">
    <source>
        <dbReference type="HAMAP-Rule" id="MF_00008"/>
    </source>
</evidence>
<accession>Q8EH94</accession>